<name>IES6_YEAST</name>
<feature type="chain" id="PRO_0000084158" description="Chromatin-remodeling complex subunit IES6">
    <location>
        <begin position="1"/>
        <end position="166"/>
    </location>
</feature>
<feature type="region of interest" description="Disordered" evidence="1">
    <location>
        <begin position="1"/>
        <end position="28"/>
    </location>
</feature>
<feature type="compositionally biased region" description="Low complexity" evidence="1">
    <location>
        <begin position="1"/>
        <end position="24"/>
    </location>
</feature>
<feature type="sequence conflict" description="In Ref. 3; AAS56131." evidence="8" ref="3">
    <original>F</original>
    <variation>I</variation>
    <location>
        <position position="32"/>
    </location>
</feature>
<reference key="1">
    <citation type="journal article" date="1997" name="Nature">
        <title>The nucleotide sequence of Saccharomyces cerevisiae chromosome V.</title>
        <authorList>
            <person name="Dietrich F.S."/>
            <person name="Mulligan J.T."/>
            <person name="Hennessy K.M."/>
            <person name="Yelton M.A."/>
            <person name="Allen E."/>
            <person name="Araujo R."/>
            <person name="Aviles E."/>
            <person name="Berno A."/>
            <person name="Brennan T."/>
            <person name="Carpenter J."/>
            <person name="Chen E."/>
            <person name="Cherry J.M."/>
            <person name="Chung E."/>
            <person name="Duncan M."/>
            <person name="Guzman E."/>
            <person name="Hartzell G."/>
            <person name="Hunicke-Smith S."/>
            <person name="Hyman R.W."/>
            <person name="Kayser A."/>
            <person name="Komp C."/>
            <person name="Lashkari D."/>
            <person name="Lew H."/>
            <person name="Lin D."/>
            <person name="Mosedale D."/>
            <person name="Nakahara K."/>
            <person name="Namath A."/>
            <person name="Norgren R."/>
            <person name="Oefner P."/>
            <person name="Oh C."/>
            <person name="Petel F.X."/>
            <person name="Roberts D."/>
            <person name="Sehl P."/>
            <person name="Schramm S."/>
            <person name="Shogren T."/>
            <person name="Smith V."/>
            <person name="Taylor P."/>
            <person name="Wei Y."/>
            <person name="Botstein D."/>
            <person name="Davis R.W."/>
        </authorList>
    </citation>
    <scope>NUCLEOTIDE SEQUENCE [LARGE SCALE GENOMIC DNA]</scope>
    <source>
        <strain>ATCC 204508 / S288c</strain>
    </source>
</reference>
<reference key="2">
    <citation type="journal article" date="2014" name="G3 (Bethesda)">
        <title>The reference genome sequence of Saccharomyces cerevisiae: Then and now.</title>
        <authorList>
            <person name="Engel S.R."/>
            <person name="Dietrich F.S."/>
            <person name="Fisk D.G."/>
            <person name="Binkley G."/>
            <person name="Balakrishnan R."/>
            <person name="Costanzo M.C."/>
            <person name="Dwight S.S."/>
            <person name="Hitz B.C."/>
            <person name="Karra K."/>
            <person name="Nash R.S."/>
            <person name="Weng S."/>
            <person name="Wong E.D."/>
            <person name="Lloyd P."/>
            <person name="Skrzypek M.S."/>
            <person name="Miyasato S.R."/>
            <person name="Simison M."/>
            <person name="Cherry J.M."/>
        </authorList>
    </citation>
    <scope>GENOME REANNOTATION</scope>
    <source>
        <strain>ATCC 204508 / S288c</strain>
    </source>
</reference>
<reference key="3">
    <citation type="journal article" date="2007" name="Genome Res.">
        <title>Approaching a complete repository of sequence-verified protein-encoding clones for Saccharomyces cerevisiae.</title>
        <authorList>
            <person name="Hu Y."/>
            <person name="Rolfs A."/>
            <person name="Bhullar B."/>
            <person name="Murthy T.V.S."/>
            <person name="Zhu C."/>
            <person name="Berger M.F."/>
            <person name="Camargo A.A."/>
            <person name="Kelley F."/>
            <person name="McCarron S."/>
            <person name="Jepson D."/>
            <person name="Richardson A."/>
            <person name="Raphael J."/>
            <person name="Moreira D."/>
            <person name="Taycher E."/>
            <person name="Zuo D."/>
            <person name="Mohr S."/>
            <person name="Kane M.F."/>
            <person name="Williamson J."/>
            <person name="Simpson A.J.G."/>
            <person name="Bulyk M.L."/>
            <person name="Harlow E."/>
            <person name="Marsischky G."/>
            <person name="Kolodner R.D."/>
            <person name="LaBaer J."/>
        </authorList>
    </citation>
    <scope>NUCLEOTIDE SEQUENCE [GENOMIC DNA]</scope>
    <source>
        <strain>ATCC 204508 / S288c</strain>
    </source>
</reference>
<reference key="4">
    <citation type="journal article" date="2003" name="Mol. Cell">
        <title>Involvement of actin-related proteins in ATP-dependent chromatin remodeling.</title>
        <authorList>
            <person name="Shen X."/>
            <person name="Ranallo R."/>
            <person name="Choi E."/>
            <person name="Wu C."/>
        </authorList>
    </citation>
    <scope>IDENTIFICATION IN THE INO80 COMPLEX</scope>
    <scope>IDENTIFICATION BY MASS SPECTROMETRY</scope>
</reference>
<reference key="5">
    <citation type="journal article" date="2003" name="Nature">
        <title>Global analysis of protein localization in budding yeast.</title>
        <authorList>
            <person name="Huh W.-K."/>
            <person name="Falvo J.V."/>
            <person name="Gerke L.C."/>
            <person name="Carroll A.S."/>
            <person name="Howson R.W."/>
            <person name="Weissman J.S."/>
            <person name="O'Shea E.K."/>
        </authorList>
    </citation>
    <scope>SUBCELLULAR LOCATION [LARGE SCALE ANALYSIS]</scope>
</reference>
<reference key="6">
    <citation type="journal article" date="2003" name="Nature">
        <title>Global analysis of protein expression in yeast.</title>
        <authorList>
            <person name="Ghaemmaghami S."/>
            <person name="Huh W.-K."/>
            <person name="Bower K."/>
            <person name="Howson R.W."/>
            <person name="Belle A."/>
            <person name="Dephoure N."/>
            <person name="O'Shea E.K."/>
            <person name="Weissman J.S."/>
        </authorList>
    </citation>
    <scope>LEVEL OF PROTEIN EXPRESSION [LARGE SCALE ANALYSIS]</scope>
</reference>
<reference key="7">
    <citation type="journal article" date="2004" name="Cell">
        <title>INO80 and gamma-H2AX interaction links ATP-dependent chromatin remodeling to DNA damage repair.</title>
        <authorList>
            <person name="Morrison A.J."/>
            <person name="Highland J."/>
            <person name="Krogan N.J."/>
            <person name="Arbel-Eden A."/>
            <person name="Greenblatt J.F."/>
            <person name="Haber J.E."/>
            <person name="Shen X."/>
        </authorList>
    </citation>
    <scope>FUNCTION OF THE INO80 COMPLEX</scope>
</reference>
<reference key="8">
    <citation type="journal article" date="2004" name="Proc. Natl. Acad. Sci. U.S.A.">
        <title>Mutator genes for suppression of gross chromosomal rearrangements identified by a genome-wide screening in Saccharomyces cerevisiae.</title>
        <authorList>
            <person name="Smith S."/>
            <person name="Hwang J.-Y."/>
            <person name="Banerjee S."/>
            <person name="Majeed A."/>
            <person name="Gupta A."/>
            <person name="Myung K."/>
        </authorList>
    </citation>
    <scope>FUNCTION</scope>
</reference>
<reference key="9">
    <citation type="journal article" date="2007" name="Mol. Cell. Biol.">
        <title>Regulation of telomere structure and functions by subunits of the INO80 chromatin remodeling complex.</title>
        <authorList>
            <person name="Yu E.Y."/>
            <person name="Steinberg-Neifach O."/>
            <person name="Dandjinou A.T."/>
            <person name="Kang F."/>
            <person name="Morrison A.J."/>
            <person name="Shen X."/>
            <person name="Lue N.F."/>
        </authorList>
    </citation>
    <scope>FUNCTION</scope>
</reference>
<sequence length="166" mass="18533">MSGSRGNSSNSSVSNNSNNNNNNDGGDERLLFLRSVGERNEIGFPSRFKSAHYKKPTRRHKSARQLISDENKRINALLTKANKAAESSTAARRLVPKATYFSVEAPPSIRPAKKYCDVTGLKGFYKSPTNNIRYHNAEIYQLIVKPMAPGVDQEYLKLRGANFVLK</sequence>
<gene>
    <name type="primary">IES6</name>
    <name type="ordered locus">YEL044W</name>
    <name type="ORF">SYGP-ORF13</name>
</gene>
<proteinExistence type="evidence at protein level"/>
<comment type="function">
    <text evidence="5 6 7">Probably involved in transcription regulation via its interaction with the INO80 complex, a chromatin remodeling complex. Also involved in the regulation of telomere length.</text>
</comment>
<comment type="subunit">
    <text evidence="2">Component of the chromatin-remodeling INO80 complex, at least composed of ARP4, ARP5, ARP8, RVB1, RVB2, TAF14, NHP10, IES1, IES3, IES4, IES6, ACT1, IES2, IES5 and INO80.</text>
</comment>
<comment type="subcellular location">
    <subcellularLocation>
        <location evidence="3">Nucleus</location>
    </subcellularLocation>
</comment>
<comment type="miscellaneous">
    <text evidence="4">Present with 1720 molecules/cell in log phase SD medium.</text>
</comment>
<comment type="similarity">
    <text evidence="8">Belongs to the IES6 family.</text>
</comment>
<keyword id="KW-0002">3D-structure</keyword>
<keyword id="KW-0539">Nucleus</keyword>
<keyword id="KW-1185">Reference proteome</keyword>
<keyword id="KW-0804">Transcription</keyword>
<keyword id="KW-0805">Transcription regulation</keyword>
<dbReference type="EMBL" id="U18779">
    <property type="protein sequence ID" value="AAB64998.1"/>
    <property type="molecule type" value="Genomic_DNA"/>
</dbReference>
<dbReference type="EMBL" id="AY557805">
    <property type="protein sequence ID" value="AAS56131.1"/>
    <property type="molecule type" value="Genomic_DNA"/>
</dbReference>
<dbReference type="EMBL" id="BK006939">
    <property type="protein sequence ID" value="DAA07609.1"/>
    <property type="molecule type" value="Genomic_DNA"/>
</dbReference>
<dbReference type="PIR" id="S30833">
    <property type="entry name" value="S30833"/>
</dbReference>
<dbReference type="RefSeq" id="NP_010870.1">
    <property type="nucleotide sequence ID" value="NM_001178859.1"/>
</dbReference>
<dbReference type="PDB" id="8ETS">
    <property type="method" value="EM"/>
    <property type="resolution" value="3.04 A"/>
    <property type="chains" value="S=28-166"/>
</dbReference>
<dbReference type="PDB" id="8ETU">
    <property type="method" value="EM"/>
    <property type="resolution" value="2.80 A"/>
    <property type="chains" value="S=28-166"/>
</dbReference>
<dbReference type="PDB" id="8ETW">
    <property type="method" value="EM"/>
    <property type="resolution" value="2.64 A"/>
    <property type="chains" value="S=28-166"/>
</dbReference>
<dbReference type="PDB" id="8EU9">
    <property type="method" value="EM"/>
    <property type="resolution" value="3.48 A"/>
    <property type="chains" value="S=28-162"/>
</dbReference>
<dbReference type="PDB" id="8EUF">
    <property type="method" value="EM"/>
    <property type="resolution" value="3.41 A"/>
    <property type="chains" value="S=1-166"/>
</dbReference>
<dbReference type="PDBsum" id="8ETS"/>
<dbReference type="PDBsum" id="8ETU"/>
<dbReference type="PDBsum" id="8ETW"/>
<dbReference type="PDBsum" id="8EU9"/>
<dbReference type="PDBsum" id="8EUF"/>
<dbReference type="EMDB" id="EMD-28597"/>
<dbReference type="EMDB" id="EMD-28599"/>
<dbReference type="EMDB" id="EMD-28601"/>
<dbReference type="EMDB" id="EMD-28609"/>
<dbReference type="EMDB" id="EMD-28613"/>
<dbReference type="SMR" id="P32617"/>
<dbReference type="BioGRID" id="36685">
    <property type="interactions" value="58"/>
</dbReference>
<dbReference type="ComplexPortal" id="CPX-863">
    <property type="entry name" value="INO80 chromatin remodeling complex"/>
</dbReference>
<dbReference type="FunCoup" id="P32617">
    <property type="interactions" value="122"/>
</dbReference>
<dbReference type="IntAct" id="P32617">
    <property type="interactions" value="19"/>
</dbReference>
<dbReference type="MINT" id="P32617"/>
<dbReference type="STRING" id="4932.YEL044W"/>
<dbReference type="iPTMnet" id="P32617"/>
<dbReference type="PaxDb" id="4932-YEL044W"/>
<dbReference type="PeptideAtlas" id="P32617"/>
<dbReference type="EnsemblFungi" id="YEL044W_mRNA">
    <property type="protein sequence ID" value="YEL044W"/>
    <property type="gene ID" value="YEL044W"/>
</dbReference>
<dbReference type="GeneID" id="856667"/>
<dbReference type="KEGG" id="sce:YEL044W"/>
<dbReference type="AGR" id="SGD:S000000770"/>
<dbReference type="SGD" id="S000000770">
    <property type="gene designation" value="IES6"/>
</dbReference>
<dbReference type="VEuPathDB" id="FungiDB:YEL044W"/>
<dbReference type="eggNOG" id="KOG4137">
    <property type="taxonomic scope" value="Eukaryota"/>
</dbReference>
<dbReference type="GeneTree" id="ENSGT00390000014303"/>
<dbReference type="HOGENOM" id="CLU_071116_2_1_1"/>
<dbReference type="InParanoid" id="P32617"/>
<dbReference type="OMA" id="VIKPMAP"/>
<dbReference type="OrthoDB" id="49520at2759"/>
<dbReference type="BioCyc" id="YEAST:G3O-30164-MONOMER"/>
<dbReference type="BioGRID-ORCS" id="856667">
    <property type="hits" value="9 hits in 10 CRISPR screens"/>
</dbReference>
<dbReference type="PRO" id="PR:P32617"/>
<dbReference type="Proteomes" id="UP000002311">
    <property type="component" value="Chromosome V"/>
</dbReference>
<dbReference type="RNAct" id="P32617">
    <property type="molecule type" value="protein"/>
</dbReference>
<dbReference type="GO" id="GO:0031011">
    <property type="term" value="C:Ino80 complex"/>
    <property type="evidence" value="ECO:0000353"/>
    <property type="project" value="ComplexPortal"/>
</dbReference>
<dbReference type="GO" id="GO:0005634">
    <property type="term" value="C:nucleus"/>
    <property type="evidence" value="ECO:0000314"/>
    <property type="project" value="ComplexPortal"/>
</dbReference>
<dbReference type="GO" id="GO:0006338">
    <property type="term" value="P:chromatin remodeling"/>
    <property type="evidence" value="ECO:0000314"/>
    <property type="project" value="ComplexPortal"/>
</dbReference>
<dbReference type="GO" id="GO:0006281">
    <property type="term" value="P:DNA repair"/>
    <property type="evidence" value="ECO:0000303"/>
    <property type="project" value="ComplexPortal"/>
</dbReference>
<dbReference type="GO" id="GO:0006355">
    <property type="term" value="P:regulation of DNA-templated transcription"/>
    <property type="evidence" value="ECO:0000303"/>
    <property type="project" value="ComplexPortal"/>
</dbReference>
<dbReference type="InterPro" id="IPR029525">
    <property type="entry name" value="INO80C/Ies6"/>
</dbReference>
<dbReference type="InterPro" id="IPR013272">
    <property type="entry name" value="Vps72/YL1_C"/>
</dbReference>
<dbReference type="PANTHER" id="PTHR31200">
    <property type="entry name" value="INO80 COMPLEX SUBUNIT C"/>
    <property type="match status" value="1"/>
</dbReference>
<dbReference type="PANTHER" id="PTHR31200:SF1">
    <property type="entry name" value="INO80 COMPLEX SUBUNIT C"/>
    <property type="match status" value="1"/>
</dbReference>
<dbReference type="Pfam" id="PF08265">
    <property type="entry name" value="YL1_C"/>
    <property type="match status" value="1"/>
</dbReference>
<dbReference type="SMART" id="SM00993">
    <property type="entry name" value="YL1_C"/>
    <property type="match status" value="1"/>
</dbReference>
<evidence type="ECO:0000256" key="1">
    <source>
        <dbReference type="SAM" id="MobiDB-lite"/>
    </source>
</evidence>
<evidence type="ECO:0000269" key="2">
    <source>
    </source>
</evidence>
<evidence type="ECO:0000269" key="3">
    <source>
    </source>
</evidence>
<evidence type="ECO:0000269" key="4">
    <source>
    </source>
</evidence>
<evidence type="ECO:0000269" key="5">
    <source>
    </source>
</evidence>
<evidence type="ECO:0000269" key="6">
    <source>
    </source>
</evidence>
<evidence type="ECO:0000269" key="7">
    <source>
    </source>
</evidence>
<evidence type="ECO:0000305" key="8"/>
<organism>
    <name type="scientific">Saccharomyces cerevisiae (strain ATCC 204508 / S288c)</name>
    <name type="common">Baker's yeast</name>
    <dbReference type="NCBI Taxonomy" id="559292"/>
    <lineage>
        <taxon>Eukaryota</taxon>
        <taxon>Fungi</taxon>
        <taxon>Dikarya</taxon>
        <taxon>Ascomycota</taxon>
        <taxon>Saccharomycotina</taxon>
        <taxon>Saccharomycetes</taxon>
        <taxon>Saccharomycetales</taxon>
        <taxon>Saccharomycetaceae</taxon>
        <taxon>Saccharomyces</taxon>
    </lineage>
</organism>
<accession>P32617</accession>
<accession>D3DLK5</accession>
<accession>Q6Q5Q5</accession>
<protein>
    <recommendedName>
        <fullName>Chromatin-remodeling complex subunit IES6</fullName>
    </recommendedName>
    <alternativeName>
        <fullName>Ino eighty subunit 6</fullName>
    </alternativeName>
</protein>